<name>MLO11_ARATH</name>
<gene>
    <name type="primary">MLO11</name>
    <name type="ordered locus">At5g53760</name>
    <name type="ORF">MGN6.12</name>
</gene>
<keyword id="KW-0112">Calmodulin-binding</keyword>
<keyword id="KW-0472">Membrane</keyword>
<keyword id="KW-0568">Pathogenesis-related protein</keyword>
<keyword id="KW-0611">Plant defense</keyword>
<keyword id="KW-1185">Reference proteome</keyword>
<keyword id="KW-0812">Transmembrane</keyword>
<keyword id="KW-1133">Transmembrane helix</keyword>
<comment type="function">
    <text evidence="1">May be involved in modulation of pathogen defense and leaf cell death. Activity seems to be regulated by Ca(2+)-dependent calmodulin binding and seems not to require heterotrimeric G proteins (By similarity).</text>
</comment>
<comment type="subcellular location">
    <subcellularLocation>
        <location evidence="1">Membrane</location>
        <topology evidence="1">Multi-pass membrane protein</topology>
    </subcellularLocation>
</comment>
<comment type="domain">
    <text evidence="1">The C-terminus contains a calmodulin-binding domain, which binds calmodulin in a calcium-dependent fashion.</text>
</comment>
<comment type="similarity">
    <text evidence="4">Belongs to the MLO family.</text>
</comment>
<reference key="1">
    <citation type="journal article" date="2003" name="J. Mol. Evol.">
        <title>Molecular phylogeny and evolution of the plant-specific seven-transmembrane MLO family.</title>
        <authorList>
            <person name="Devoto A."/>
            <person name="Hartmann H.A."/>
            <person name="Piffanelli P."/>
            <person name="Elliott C."/>
            <person name="Simmons C."/>
            <person name="Taramino G."/>
            <person name="Goh C.-S."/>
            <person name="Cohen F.E."/>
            <person name="Emerson B.C."/>
            <person name="Schulze-Lefert P."/>
            <person name="Panstruga R."/>
        </authorList>
    </citation>
    <scope>NUCLEOTIDE SEQUENCE [MRNA]</scope>
</reference>
<reference key="2">
    <citation type="journal article" date="1999" name="DNA Res.">
        <title>Structural analysis of Arabidopsis thaliana chromosome 5. IX. Sequence features of the regions of 1,011,550 bp covered by seventeen P1 and TAC clones.</title>
        <authorList>
            <person name="Kaneko T."/>
            <person name="Katoh T."/>
            <person name="Sato S."/>
            <person name="Nakamura Y."/>
            <person name="Asamizu E."/>
            <person name="Kotani H."/>
            <person name="Miyajima N."/>
            <person name="Tabata S."/>
        </authorList>
    </citation>
    <scope>NUCLEOTIDE SEQUENCE [LARGE SCALE GENOMIC DNA]</scope>
    <source>
        <strain>cv. Columbia</strain>
    </source>
</reference>
<reference key="3">
    <citation type="journal article" date="2017" name="Plant J.">
        <title>Araport11: a complete reannotation of the Arabidopsis thaliana reference genome.</title>
        <authorList>
            <person name="Cheng C.Y."/>
            <person name="Krishnakumar V."/>
            <person name="Chan A.P."/>
            <person name="Thibaud-Nissen F."/>
            <person name="Schobel S."/>
            <person name="Town C.D."/>
        </authorList>
    </citation>
    <scope>GENOME REANNOTATION</scope>
    <source>
        <strain>cv. Columbia</strain>
    </source>
</reference>
<reference key="4">
    <citation type="journal article" date="2003" name="Science">
        <title>Empirical analysis of transcriptional activity in the Arabidopsis genome.</title>
        <authorList>
            <person name="Yamada K."/>
            <person name="Lim J."/>
            <person name="Dale J.M."/>
            <person name="Chen H."/>
            <person name="Shinn P."/>
            <person name="Palm C.J."/>
            <person name="Southwick A.M."/>
            <person name="Wu H.C."/>
            <person name="Kim C.J."/>
            <person name="Nguyen M."/>
            <person name="Pham P.K."/>
            <person name="Cheuk R.F."/>
            <person name="Karlin-Newmann G."/>
            <person name="Liu S.X."/>
            <person name="Lam B."/>
            <person name="Sakano H."/>
            <person name="Wu T."/>
            <person name="Yu G."/>
            <person name="Miranda M."/>
            <person name="Quach H.L."/>
            <person name="Tripp M."/>
            <person name="Chang C.H."/>
            <person name="Lee J.M."/>
            <person name="Toriumi M.J."/>
            <person name="Chan M.M."/>
            <person name="Tang C.C."/>
            <person name="Onodera C.S."/>
            <person name="Deng J.M."/>
            <person name="Akiyama K."/>
            <person name="Ansari Y."/>
            <person name="Arakawa T."/>
            <person name="Banh J."/>
            <person name="Banno F."/>
            <person name="Bowser L."/>
            <person name="Brooks S.Y."/>
            <person name="Carninci P."/>
            <person name="Chao Q."/>
            <person name="Choy N."/>
            <person name="Enju A."/>
            <person name="Goldsmith A.D."/>
            <person name="Gurjal M."/>
            <person name="Hansen N.F."/>
            <person name="Hayashizaki Y."/>
            <person name="Johnson-Hopson C."/>
            <person name="Hsuan V.W."/>
            <person name="Iida K."/>
            <person name="Karnes M."/>
            <person name="Khan S."/>
            <person name="Koesema E."/>
            <person name="Ishida J."/>
            <person name="Jiang P.X."/>
            <person name="Jones T."/>
            <person name="Kawai J."/>
            <person name="Kamiya A."/>
            <person name="Meyers C."/>
            <person name="Nakajima M."/>
            <person name="Narusaka M."/>
            <person name="Seki M."/>
            <person name="Sakurai T."/>
            <person name="Satou M."/>
            <person name="Tamse R."/>
            <person name="Vaysberg M."/>
            <person name="Wallender E.K."/>
            <person name="Wong C."/>
            <person name="Yamamura Y."/>
            <person name="Yuan S."/>
            <person name="Shinozaki K."/>
            <person name="Davis R.W."/>
            <person name="Theologis A."/>
            <person name="Ecker J.R."/>
        </authorList>
    </citation>
    <scope>NUCLEOTIDE SEQUENCE [LARGE SCALE MRNA]</scope>
    <source>
        <strain>cv. Columbia</strain>
    </source>
</reference>
<protein>
    <recommendedName>
        <fullName>MLO-like protein 11</fullName>
        <shortName>AtMlo11</shortName>
    </recommendedName>
</protein>
<organism>
    <name type="scientific">Arabidopsis thaliana</name>
    <name type="common">Mouse-ear cress</name>
    <dbReference type="NCBI Taxonomy" id="3702"/>
    <lineage>
        <taxon>Eukaryota</taxon>
        <taxon>Viridiplantae</taxon>
        <taxon>Streptophyta</taxon>
        <taxon>Embryophyta</taxon>
        <taxon>Tracheophyta</taxon>
        <taxon>Spermatophyta</taxon>
        <taxon>Magnoliopsida</taxon>
        <taxon>eudicotyledons</taxon>
        <taxon>Gunneridae</taxon>
        <taxon>Pentapetalae</taxon>
        <taxon>rosids</taxon>
        <taxon>malvids</taxon>
        <taxon>Brassicales</taxon>
        <taxon>Brassicaceae</taxon>
        <taxon>Camelineae</taxon>
        <taxon>Arabidopsis</taxon>
    </lineage>
</organism>
<accession>Q9FI00</accession>
<proteinExistence type="evidence at transcript level"/>
<feature type="chain" id="PRO_0000209941" description="MLO-like protein 11">
    <location>
        <begin position="1"/>
        <end position="573"/>
    </location>
</feature>
<feature type="topological domain" description="Extracellular" evidence="2">
    <location>
        <begin position="1"/>
        <end position="19"/>
    </location>
</feature>
<feature type="transmembrane region" description="Helical; Name=1" evidence="2">
    <location>
        <begin position="20"/>
        <end position="40"/>
    </location>
</feature>
<feature type="topological domain" description="Cytoplasmic" evidence="2">
    <location>
        <begin position="41"/>
        <end position="69"/>
    </location>
</feature>
<feature type="transmembrane region" description="Helical; Name=2" evidence="2">
    <location>
        <begin position="70"/>
        <end position="90"/>
    </location>
</feature>
<feature type="topological domain" description="Extracellular" evidence="2">
    <location>
        <begin position="91"/>
        <end position="163"/>
    </location>
</feature>
<feature type="transmembrane region" description="Helical; Name=3" evidence="2">
    <location>
        <begin position="164"/>
        <end position="184"/>
    </location>
</feature>
<feature type="topological domain" description="Cytoplasmic" evidence="2">
    <location>
        <begin position="185"/>
        <end position="287"/>
    </location>
</feature>
<feature type="transmembrane region" description="Helical; Name=4" evidence="2">
    <location>
        <begin position="288"/>
        <end position="308"/>
    </location>
</feature>
<feature type="transmembrane region" description="Helical; Name=5" evidence="2">
    <location>
        <begin position="309"/>
        <end position="329"/>
    </location>
</feature>
<feature type="topological domain" description="Cytoplasmic" evidence="2">
    <location>
        <begin position="330"/>
        <end position="371"/>
    </location>
</feature>
<feature type="transmembrane region" description="Helical; Name=6" evidence="2">
    <location>
        <begin position="372"/>
        <end position="392"/>
    </location>
</feature>
<feature type="topological domain" description="Extracellular" evidence="2">
    <location>
        <begin position="393"/>
        <end position="411"/>
    </location>
</feature>
<feature type="transmembrane region" description="Helical; Name=7" evidence="2">
    <location>
        <begin position="412"/>
        <end position="432"/>
    </location>
</feature>
<feature type="topological domain" description="Cytoplasmic" evidence="2">
    <location>
        <begin position="433"/>
        <end position="573"/>
    </location>
</feature>
<feature type="region of interest" description="Calmodulin-binding">
    <location>
        <begin position="446"/>
        <end position="467"/>
    </location>
</feature>
<feature type="region of interest" description="Disordered" evidence="3">
    <location>
        <begin position="500"/>
        <end position="532"/>
    </location>
</feature>
<feature type="region of interest" description="Disordered" evidence="3">
    <location>
        <begin position="554"/>
        <end position="573"/>
    </location>
</feature>
<feature type="compositionally biased region" description="Low complexity" evidence="3">
    <location>
        <begin position="507"/>
        <end position="516"/>
    </location>
</feature>
<feature type="compositionally biased region" description="Polar residues" evidence="3">
    <location>
        <begin position="561"/>
        <end position="573"/>
    </location>
</feature>
<evidence type="ECO:0000250" key="1"/>
<evidence type="ECO:0000255" key="2"/>
<evidence type="ECO:0000256" key="3">
    <source>
        <dbReference type="SAM" id="MobiDB-lite"/>
    </source>
</evidence>
<evidence type="ECO:0000305" key="4"/>
<sequence>MGEGEENGNEADSNERSLALSPTWSVAIVLTVFVVVSLIVERSIYRLSTWLRKTKRKPMFAALEKMKEELMLLGFISLLLTATSSTIANICVPSSFYNDRFLPCTRSEIQEELESGSTVKRNLLTKSLFFNIFRRRLDVIKRTTCSEGHEPFVSYEGLEQLHRFIFIMAVTHVTYSCLTMLLAIVKIHSWRIWEDVARLDRHDCLTAVAREKIFRRQTTFVQYHTSAPLAKNRILIWVTCFFRQFGRSVDRSDYLTLRKGFIVNHHLTLKYDFHSYMIRSMEEEFQRIVGVSGPLWGFVVAFMLFNIKGSNLYFWIAIIPVTLVLLVGAKLQHVIATLALENAGLTEYPSGVKLRPRDELFWFNKPELLLSLIHFILFQNSFELASFFWFWWQFGYSSCFLKNHYLVYFRLLLGFAGQFLCSYSTLPLYALVTQMGTNYKAALIPQRIRETIRGWGKATRRKRRHGLYGDDSTVRTETSTIASLEEYDHQVLDVTETSFEQQRKQQEQGTTELELQPIQPRNDCVPNDTSSRVGTPLLRPWLSISSPTTTIELRSEPMETLSRSSSLPSEKRV</sequence>
<dbReference type="EMBL" id="AF369572">
    <property type="protein sequence ID" value="AAK53804.1"/>
    <property type="molecule type" value="mRNA"/>
</dbReference>
<dbReference type="EMBL" id="AB017066">
    <property type="protein sequence ID" value="BAB09548.1"/>
    <property type="molecule type" value="Genomic_DNA"/>
</dbReference>
<dbReference type="EMBL" id="CP002688">
    <property type="protein sequence ID" value="AED96403.1"/>
    <property type="molecule type" value="Genomic_DNA"/>
</dbReference>
<dbReference type="EMBL" id="CP002688">
    <property type="protein sequence ID" value="AED96404.1"/>
    <property type="molecule type" value="Genomic_DNA"/>
</dbReference>
<dbReference type="EMBL" id="AY057502">
    <property type="protein sequence ID" value="AAL09743.1"/>
    <property type="molecule type" value="mRNA"/>
</dbReference>
<dbReference type="EMBL" id="BT000434">
    <property type="protein sequence ID" value="AAN17411.1"/>
    <property type="molecule type" value="mRNA"/>
</dbReference>
<dbReference type="EMBL" id="BT002581">
    <property type="protein sequence ID" value="AAO00941.1"/>
    <property type="molecule type" value="mRNA"/>
</dbReference>
<dbReference type="RefSeq" id="NP_001032070.1">
    <property type="nucleotide sequence ID" value="NM_001036993.2"/>
</dbReference>
<dbReference type="RefSeq" id="NP_200187.1">
    <property type="nucleotide sequence ID" value="NM_124755.3"/>
</dbReference>
<dbReference type="BioGRID" id="20701">
    <property type="interactions" value="3"/>
</dbReference>
<dbReference type="FunCoup" id="Q9FI00">
    <property type="interactions" value="72"/>
</dbReference>
<dbReference type="IntAct" id="Q9FI00">
    <property type="interactions" value="2"/>
</dbReference>
<dbReference type="STRING" id="3702.Q9FI00"/>
<dbReference type="PaxDb" id="3702-AT5G53760.1"/>
<dbReference type="ProteomicsDB" id="238376"/>
<dbReference type="EnsemblPlants" id="AT5G53760.1">
    <property type="protein sequence ID" value="AT5G53760.1"/>
    <property type="gene ID" value="AT5G53760"/>
</dbReference>
<dbReference type="EnsemblPlants" id="AT5G53760.2">
    <property type="protein sequence ID" value="AT5G53760.2"/>
    <property type="gene ID" value="AT5G53760"/>
</dbReference>
<dbReference type="GeneID" id="835457"/>
<dbReference type="Gramene" id="AT5G53760.1">
    <property type="protein sequence ID" value="AT5G53760.1"/>
    <property type="gene ID" value="AT5G53760"/>
</dbReference>
<dbReference type="Gramene" id="AT5G53760.2">
    <property type="protein sequence ID" value="AT5G53760.2"/>
    <property type="gene ID" value="AT5G53760"/>
</dbReference>
<dbReference type="KEGG" id="ath:AT5G53760"/>
<dbReference type="Araport" id="AT5G53760"/>
<dbReference type="TAIR" id="AT5G53760">
    <property type="gene designation" value="MLO11"/>
</dbReference>
<dbReference type="eggNOG" id="KOG0017">
    <property type="taxonomic scope" value="Eukaryota"/>
</dbReference>
<dbReference type="HOGENOM" id="CLU_024720_2_1_1"/>
<dbReference type="InParanoid" id="Q9FI00"/>
<dbReference type="OMA" id="RRMRMFP"/>
<dbReference type="PhylomeDB" id="Q9FI00"/>
<dbReference type="PRO" id="PR:Q9FI00"/>
<dbReference type="Proteomes" id="UP000006548">
    <property type="component" value="Chromosome 5"/>
</dbReference>
<dbReference type="ExpressionAtlas" id="Q9FI00">
    <property type="expression patterns" value="baseline and differential"/>
</dbReference>
<dbReference type="GO" id="GO:0016020">
    <property type="term" value="C:membrane"/>
    <property type="evidence" value="ECO:0007669"/>
    <property type="project" value="UniProtKB-SubCell"/>
</dbReference>
<dbReference type="GO" id="GO:0005516">
    <property type="term" value="F:calmodulin binding"/>
    <property type="evidence" value="ECO:0007669"/>
    <property type="project" value="UniProtKB-KW"/>
</dbReference>
<dbReference type="GO" id="GO:0006952">
    <property type="term" value="P:defense response"/>
    <property type="evidence" value="ECO:0007669"/>
    <property type="project" value="UniProtKB-KW"/>
</dbReference>
<dbReference type="InterPro" id="IPR004326">
    <property type="entry name" value="Mlo"/>
</dbReference>
<dbReference type="PANTHER" id="PTHR31942">
    <property type="entry name" value="MLO-LIKE PROTEIN 1"/>
    <property type="match status" value="1"/>
</dbReference>
<dbReference type="PANTHER" id="PTHR31942:SF87">
    <property type="entry name" value="MLO-LIKE PROTEIN 11"/>
    <property type="match status" value="1"/>
</dbReference>
<dbReference type="Pfam" id="PF03094">
    <property type="entry name" value="Mlo"/>
    <property type="match status" value="1"/>
</dbReference>